<reference key="1">
    <citation type="submission" date="2007-05" db="EMBL/GenBank/DDBJ databases">
        <title>Complete sequence of Geobacter uraniireducens Rf4.</title>
        <authorList>
            <consortium name="US DOE Joint Genome Institute"/>
            <person name="Copeland A."/>
            <person name="Lucas S."/>
            <person name="Lapidus A."/>
            <person name="Barry K."/>
            <person name="Detter J.C."/>
            <person name="Glavina del Rio T."/>
            <person name="Hammon N."/>
            <person name="Israni S."/>
            <person name="Dalin E."/>
            <person name="Tice H."/>
            <person name="Pitluck S."/>
            <person name="Chertkov O."/>
            <person name="Brettin T."/>
            <person name="Bruce D."/>
            <person name="Han C."/>
            <person name="Schmutz J."/>
            <person name="Larimer F."/>
            <person name="Land M."/>
            <person name="Hauser L."/>
            <person name="Kyrpides N."/>
            <person name="Mikhailova N."/>
            <person name="Shelobolina E."/>
            <person name="Aklujkar M."/>
            <person name="Lovley D."/>
            <person name="Richardson P."/>
        </authorList>
    </citation>
    <scope>NUCLEOTIDE SEQUENCE [LARGE SCALE GENOMIC DNA]</scope>
    <source>
        <strain>ATCC BAA-1134 / JCM 13001 / Rf4</strain>
    </source>
</reference>
<organism>
    <name type="scientific">Geotalea uraniireducens (strain Rf4)</name>
    <name type="common">Geobacter uraniireducens</name>
    <dbReference type="NCBI Taxonomy" id="351605"/>
    <lineage>
        <taxon>Bacteria</taxon>
        <taxon>Pseudomonadati</taxon>
        <taxon>Thermodesulfobacteriota</taxon>
        <taxon>Desulfuromonadia</taxon>
        <taxon>Geobacterales</taxon>
        <taxon>Geobacteraceae</taxon>
        <taxon>Geotalea</taxon>
    </lineage>
</organism>
<protein>
    <recommendedName>
        <fullName evidence="1">Ribonuclease PH</fullName>
        <shortName evidence="1">RNase PH</shortName>
        <ecNumber evidence="1">2.7.7.56</ecNumber>
    </recommendedName>
    <alternativeName>
        <fullName evidence="1">tRNA nucleotidyltransferase</fullName>
    </alternativeName>
</protein>
<feature type="chain" id="PRO_1000082293" description="Ribonuclease PH">
    <location>
        <begin position="1"/>
        <end position="238"/>
    </location>
</feature>
<feature type="binding site" evidence="1">
    <location>
        <position position="86"/>
    </location>
    <ligand>
        <name>phosphate</name>
        <dbReference type="ChEBI" id="CHEBI:43474"/>
        <note>substrate</note>
    </ligand>
</feature>
<feature type="binding site" evidence="1">
    <location>
        <begin position="124"/>
        <end position="126"/>
    </location>
    <ligand>
        <name>phosphate</name>
        <dbReference type="ChEBI" id="CHEBI:43474"/>
        <note>substrate</note>
    </ligand>
</feature>
<evidence type="ECO:0000255" key="1">
    <source>
        <dbReference type="HAMAP-Rule" id="MF_00564"/>
    </source>
</evidence>
<gene>
    <name evidence="1" type="primary">rph</name>
    <name type="ordered locus">Gura_2256</name>
</gene>
<dbReference type="EC" id="2.7.7.56" evidence="1"/>
<dbReference type="EMBL" id="CP000698">
    <property type="protein sequence ID" value="ABQ26439.1"/>
    <property type="molecule type" value="Genomic_DNA"/>
</dbReference>
<dbReference type="RefSeq" id="WP_011939135.1">
    <property type="nucleotide sequence ID" value="NC_009483.1"/>
</dbReference>
<dbReference type="SMR" id="A5G3S1"/>
<dbReference type="STRING" id="351605.Gura_2256"/>
<dbReference type="KEGG" id="gur:Gura_2256"/>
<dbReference type="HOGENOM" id="CLU_050858_0_0_7"/>
<dbReference type="OrthoDB" id="9802265at2"/>
<dbReference type="Proteomes" id="UP000006695">
    <property type="component" value="Chromosome"/>
</dbReference>
<dbReference type="GO" id="GO:0000175">
    <property type="term" value="F:3'-5'-RNA exonuclease activity"/>
    <property type="evidence" value="ECO:0007669"/>
    <property type="project" value="UniProtKB-UniRule"/>
</dbReference>
<dbReference type="GO" id="GO:0000049">
    <property type="term" value="F:tRNA binding"/>
    <property type="evidence" value="ECO:0007669"/>
    <property type="project" value="UniProtKB-UniRule"/>
</dbReference>
<dbReference type="GO" id="GO:0009022">
    <property type="term" value="F:tRNA nucleotidyltransferase activity"/>
    <property type="evidence" value="ECO:0007669"/>
    <property type="project" value="UniProtKB-UniRule"/>
</dbReference>
<dbReference type="GO" id="GO:0016075">
    <property type="term" value="P:rRNA catabolic process"/>
    <property type="evidence" value="ECO:0007669"/>
    <property type="project" value="UniProtKB-UniRule"/>
</dbReference>
<dbReference type="GO" id="GO:0006364">
    <property type="term" value="P:rRNA processing"/>
    <property type="evidence" value="ECO:0007669"/>
    <property type="project" value="UniProtKB-KW"/>
</dbReference>
<dbReference type="GO" id="GO:0008033">
    <property type="term" value="P:tRNA processing"/>
    <property type="evidence" value="ECO:0007669"/>
    <property type="project" value="UniProtKB-UniRule"/>
</dbReference>
<dbReference type="CDD" id="cd11362">
    <property type="entry name" value="RNase_PH_bact"/>
    <property type="match status" value="1"/>
</dbReference>
<dbReference type="FunFam" id="3.30.230.70:FF:000003">
    <property type="entry name" value="Ribonuclease PH"/>
    <property type="match status" value="1"/>
</dbReference>
<dbReference type="Gene3D" id="3.30.230.70">
    <property type="entry name" value="GHMP Kinase, N-terminal domain"/>
    <property type="match status" value="1"/>
</dbReference>
<dbReference type="HAMAP" id="MF_00564">
    <property type="entry name" value="RNase_PH"/>
    <property type="match status" value="1"/>
</dbReference>
<dbReference type="InterPro" id="IPR001247">
    <property type="entry name" value="ExoRNase_PH_dom1"/>
</dbReference>
<dbReference type="InterPro" id="IPR015847">
    <property type="entry name" value="ExoRNase_PH_dom2"/>
</dbReference>
<dbReference type="InterPro" id="IPR036345">
    <property type="entry name" value="ExoRNase_PH_dom2_sf"/>
</dbReference>
<dbReference type="InterPro" id="IPR027408">
    <property type="entry name" value="PNPase/RNase_PH_dom_sf"/>
</dbReference>
<dbReference type="InterPro" id="IPR020568">
    <property type="entry name" value="Ribosomal_Su5_D2-typ_SF"/>
</dbReference>
<dbReference type="InterPro" id="IPR050080">
    <property type="entry name" value="RNase_PH"/>
</dbReference>
<dbReference type="InterPro" id="IPR002381">
    <property type="entry name" value="RNase_PH_bac-type"/>
</dbReference>
<dbReference type="InterPro" id="IPR018336">
    <property type="entry name" value="RNase_PH_CS"/>
</dbReference>
<dbReference type="NCBIfam" id="TIGR01966">
    <property type="entry name" value="RNasePH"/>
    <property type="match status" value="1"/>
</dbReference>
<dbReference type="PANTHER" id="PTHR11953">
    <property type="entry name" value="EXOSOME COMPLEX COMPONENT"/>
    <property type="match status" value="1"/>
</dbReference>
<dbReference type="PANTHER" id="PTHR11953:SF0">
    <property type="entry name" value="EXOSOME COMPLEX COMPONENT RRP41"/>
    <property type="match status" value="1"/>
</dbReference>
<dbReference type="Pfam" id="PF01138">
    <property type="entry name" value="RNase_PH"/>
    <property type="match status" value="1"/>
</dbReference>
<dbReference type="Pfam" id="PF03725">
    <property type="entry name" value="RNase_PH_C"/>
    <property type="match status" value="1"/>
</dbReference>
<dbReference type="SUPFAM" id="SSF55666">
    <property type="entry name" value="Ribonuclease PH domain 2-like"/>
    <property type="match status" value="1"/>
</dbReference>
<dbReference type="SUPFAM" id="SSF54211">
    <property type="entry name" value="Ribosomal protein S5 domain 2-like"/>
    <property type="match status" value="1"/>
</dbReference>
<dbReference type="PROSITE" id="PS01277">
    <property type="entry name" value="RIBONUCLEASE_PH"/>
    <property type="match status" value="1"/>
</dbReference>
<accession>A5G3S1</accession>
<proteinExistence type="inferred from homology"/>
<sequence>MRFDGRGAESLREVKITRNYLKHAEGSVLIEFGDTKVICTASVEGSVPPFLRGKGTGWVTAEYSMLPRATHTRSHRESSKGKVGGRTHEIQRLIGRSLRAVMDMNLLGERSVLIDCDVIQADGGTRTASITGAYVALYDALDGLVKKGELAAMPLKEAVAAVSVGIVDGTPLLDLNYVEDSSAEVDMNFVMTSSNRFVEVQGTAEAEPFTVEQMDAMRDLAISGIKRLFQIQKEALCQ</sequence>
<name>RNPH_GEOUR</name>
<comment type="function">
    <text evidence="1">Phosphorolytic 3'-5' exoribonuclease that plays an important role in tRNA 3'-end maturation. Removes nucleotide residues following the 3'-CCA terminus of tRNAs; can also add nucleotides to the ends of RNA molecules by using nucleoside diphosphates as substrates, but this may not be physiologically important. Probably plays a role in initiation of 16S rRNA degradation (leading to ribosome degradation) during starvation.</text>
</comment>
<comment type="catalytic activity">
    <reaction evidence="1">
        <text>tRNA(n+1) + phosphate = tRNA(n) + a ribonucleoside 5'-diphosphate</text>
        <dbReference type="Rhea" id="RHEA:10628"/>
        <dbReference type="Rhea" id="RHEA-COMP:17343"/>
        <dbReference type="Rhea" id="RHEA-COMP:17344"/>
        <dbReference type="ChEBI" id="CHEBI:43474"/>
        <dbReference type="ChEBI" id="CHEBI:57930"/>
        <dbReference type="ChEBI" id="CHEBI:173114"/>
        <dbReference type="EC" id="2.7.7.56"/>
    </reaction>
</comment>
<comment type="subunit">
    <text evidence="1">Homohexameric ring arranged as a trimer of dimers.</text>
</comment>
<comment type="similarity">
    <text evidence="1">Belongs to the RNase PH family.</text>
</comment>
<keyword id="KW-0548">Nucleotidyltransferase</keyword>
<keyword id="KW-1185">Reference proteome</keyword>
<keyword id="KW-0694">RNA-binding</keyword>
<keyword id="KW-0698">rRNA processing</keyword>
<keyword id="KW-0808">Transferase</keyword>
<keyword id="KW-0819">tRNA processing</keyword>
<keyword id="KW-0820">tRNA-binding</keyword>